<keyword id="KW-0025">Alternative splicing</keyword>
<keyword id="KW-1015">Disulfide bond</keyword>
<keyword id="KW-1032">Host cell membrane</keyword>
<keyword id="KW-1043">Host membrane</keyword>
<keyword id="KW-0945">Host-virus interaction</keyword>
<keyword id="KW-0375">Hydrogen ion transport</keyword>
<keyword id="KW-1083">Inhibition of host autophagy by virus</keyword>
<keyword id="KW-0407">Ion channel</keyword>
<keyword id="KW-0406">Ion transport</keyword>
<keyword id="KW-0449">Lipoprotein</keyword>
<keyword id="KW-0472">Membrane</keyword>
<keyword id="KW-0564">Palmitate</keyword>
<keyword id="KW-0597">Phosphoprotein</keyword>
<keyword id="KW-0735">Signal-anchor</keyword>
<keyword id="KW-0812">Transmembrane</keyword>
<keyword id="KW-1133">Transmembrane helix</keyword>
<keyword id="KW-0813">Transport</keyword>
<keyword id="KW-1182">Viral ion channel</keyword>
<keyword id="KW-0946">Virion</keyword>
<name>M2_I01A3</name>
<reference key="1">
    <citation type="journal article" date="2002" name="Proc. Natl. Acad. Sci. U.S.A.">
        <title>Emergence of multiple genotypes of H5N1 avian influenza viruses in Hong Kong SAR.</title>
        <authorList>
            <person name="Guan Y."/>
            <person name="Peiris J.S.M."/>
            <person name="Lipatov A.S."/>
            <person name="Ellis T.M."/>
            <person name="Dyrting K.C."/>
            <person name="Krauss S."/>
            <person name="Zhang L.J."/>
            <person name="Webster R.G."/>
            <person name="Shortridge K.F."/>
        </authorList>
    </citation>
    <scope>NUCLEOTIDE SEQUENCE [GENOMIC RNA]</scope>
</reference>
<organismHost>
    <name type="scientific">Aves</name>
    <dbReference type="NCBI Taxonomy" id="8782"/>
</organismHost>
<organismHost>
    <name type="scientific">Felis catus</name>
    <name type="common">Cat</name>
    <name type="synonym">Felis silvestris catus</name>
    <dbReference type="NCBI Taxonomy" id="9685"/>
</organismHost>
<organismHost>
    <name type="scientific">Homo sapiens</name>
    <name type="common">Human</name>
    <dbReference type="NCBI Taxonomy" id="9606"/>
</organismHost>
<organismHost>
    <name type="scientific">Panthera pardus</name>
    <name type="common">Leopard</name>
    <name type="synonym">Felis pardus</name>
    <dbReference type="NCBI Taxonomy" id="9691"/>
</organismHost>
<organismHost>
    <name type="scientific">Panthera tigris</name>
    <name type="common">Tiger</name>
    <dbReference type="NCBI Taxonomy" id="9694"/>
</organismHost>
<organismHost>
    <name type="scientific">Sus scrofa</name>
    <name type="common">Pig</name>
    <dbReference type="NCBI Taxonomy" id="9823"/>
</organismHost>
<accession>P0C5T3</accession>
<feature type="chain" id="PRO_0000311625" description="Matrix protein 2">
    <location>
        <begin position="1"/>
        <end position="97"/>
    </location>
</feature>
<feature type="topological domain" description="Virion surface" evidence="1">
    <location>
        <begin position="1"/>
        <end position="22"/>
    </location>
</feature>
<feature type="transmembrane region" description="Helical; Signal-anchor for type III membrane protein" evidence="1">
    <location>
        <begin position="23"/>
        <end position="43"/>
    </location>
</feature>
<feature type="topological domain" description="Intravirion" evidence="1">
    <location>
        <begin position="44"/>
        <end position="97"/>
    </location>
</feature>
<feature type="region of interest" description="Disordered" evidence="2">
    <location>
        <begin position="60"/>
        <end position="83"/>
    </location>
</feature>
<feature type="site" description="Essential for channel activity, possibly by being protonated during channel activation, and by forming the channel gate and the selective filter" evidence="1">
    <location>
        <position position="37"/>
    </location>
</feature>
<feature type="site" description="Seems to be involved in pH gating" evidence="1">
    <location>
        <position position="41"/>
    </location>
</feature>
<feature type="modified residue" description="Phosphoserine; by host" evidence="1">
    <location>
        <position position="64"/>
    </location>
</feature>
<feature type="modified residue" description="Phosphoserine; by host" evidence="1">
    <location>
        <position position="82"/>
    </location>
</feature>
<feature type="lipid moiety-binding region" description="S-palmitoyl cysteine; by host" evidence="1">
    <location>
        <position position="50"/>
    </location>
</feature>
<feature type="disulfide bond" description="Interchain (with C-17)" evidence="1">
    <location>
        <position position="17"/>
    </location>
</feature>
<feature type="disulfide bond" description="Interchain (with C-19)" evidence="1">
    <location>
        <position position="19"/>
    </location>
</feature>
<evidence type="ECO:0000255" key="1">
    <source>
        <dbReference type="HAMAP-Rule" id="MF_04069"/>
    </source>
</evidence>
<evidence type="ECO:0000256" key="2">
    <source>
        <dbReference type="SAM" id="MobiDB-lite"/>
    </source>
</evidence>
<protein>
    <recommendedName>
        <fullName evidence="1">Matrix protein 2</fullName>
    </recommendedName>
    <alternativeName>
        <fullName evidence="1">Proton channel protein M2</fullName>
    </alternativeName>
</protein>
<dbReference type="EMBL" id="AF509049">
    <property type="status" value="NOT_ANNOTATED_CDS"/>
    <property type="molecule type" value="Genomic_DNA"/>
</dbReference>
<dbReference type="SMR" id="P0C5T3"/>
<dbReference type="GO" id="GO:0020002">
    <property type="term" value="C:host cell plasma membrane"/>
    <property type="evidence" value="ECO:0007669"/>
    <property type="project" value="UniProtKB-SubCell"/>
</dbReference>
<dbReference type="GO" id="GO:0016020">
    <property type="term" value="C:membrane"/>
    <property type="evidence" value="ECO:0007669"/>
    <property type="project" value="UniProtKB-UniRule"/>
</dbReference>
<dbReference type="GO" id="GO:0055036">
    <property type="term" value="C:virion membrane"/>
    <property type="evidence" value="ECO:0007669"/>
    <property type="project" value="UniProtKB-SubCell"/>
</dbReference>
<dbReference type="GO" id="GO:0005216">
    <property type="term" value="F:monoatomic ion channel activity"/>
    <property type="evidence" value="ECO:0007669"/>
    <property type="project" value="UniProtKB-UniRule"/>
</dbReference>
<dbReference type="GO" id="GO:0015078">
    <property type="term" value="F:proton transmembrane transporter activity"/>
    <property type="evidence" value="ECO:0007669"/>
    <property type="project" value="UniProtKB-UniRule"/>
</dbReference>
<dbReference type="GO" id="GO:0051259">
    <property type="term" value="P:protein complex oligomerization"/>
    <property type="evidence" value="ECO:0007669"/>
    <property type="project" value="UniProtKB-UniRule"/>
</dbReference>
<dbReference type="GO" id="GO:0044694">
    <property type="term" value="P:symbiont genome entry into host cell via pore formation in plasma membrane"/>
    <property type="evidence" value="ECO:0007669"/>
    <property type="project" value="UniProtKB-UniRule"/>
</dbReference>
<dbReference type="GO" id="GO:0140321">
    <property type="term" value="P:symbiont-mediated suppression of host autophagy"/>
    <property type="evidence" value="ECO:0007669"/>
    <property type="project" value="UniProtKB-KW"/>
</dbReference>
<dbReference type="Gene3D" id="6.10.250.1640">
    <property type="match status" value="1"/>
</dbReference>
<dbReference type="HAMAP" id="MF_04069">
    <property type="entry name" value="INFV_M2"/>
    <property type="match status" value="1"/>
</dbReference>
<dbReference type="InterPro" id="IPR002089">
    <property type="entry name" value="Flu_M2"/>
</dbReference>
<dbReference type="Pfam" id="PF00599">
    <property type="entry name" value="Flu_M2"/>
    <property type="match status" value="1"/>
</dbReference>
<sequence length="97" mass="11202">MSLLTEVETPTRNEWECRCSGSSDPLVVASSIIGILHLILWILDRLFFKCIYRRLKYGLKRGPSTEGVPESMREEYRQEQQSAVDVDDGHFVNIELE</sequence>
<organism>
    <name type="scientific">Influenza A virus (strain A/Chicken/Hong Kong/715.5/2001 H5N1 genotype E)</name>
    <dbReference type="NCBI Taxonomy" id="196434"/>
    <lineage>
        <taxon>Viruses</taxon>
        <taxon>Riboviria</taxon>
        <taxon>Orthornavirae</taxon>
        <taxon>Negarnaviricota</taxon>
        <taxon>Polyploviricotina</taxon>
        <taxon>Insthoviricetes</taxon>
        <taxon>Articulavirales</taxon>
        <taxon>Orthomyxoviridae</taxon>
        <taxon>Alphainfluenzavirus</taxon>
        <taxon>Alphainfluenzavirus influenzae</taxon>
        <taxon>Influenza A virus</taxon>
    </lineage>
</organism>
<comment type="function">
    <text evidence="1">Forms a proton-selective ion channel that is necessary for the efficient release of the viral genome during virus entry. After attaching to the cell surface, the virion enters the cell by endocytosis. Acidification of the endosome triggers M2 ion channel activity. The influx of protons into virion interior is believed to disrupt interactions between the viral ribonucleoprotein (RNP), matrix protein 1 (M1), and lipid bilayers, thereby freeing the viral genome from interaction with viral proteins and enabling RNA segments to migrate to the host cell nucleus, where influenza virus RNA transcription and replication occur. Also plays a role in viral proteins secretory pathway. Elevates the intravesicular pH of normally acidic compartments, such as trans-Golgi network, preventing newly formed hemagglutinin from premature switching to the fusion-active conformation.</text>
</comment>
<comment type="activity regulation">
    <text>The M2 protein from most influenza A strains is inhibited by amantadine and rimantadine, resulting in viral uncoating incapacity. Emergence of amantadine-resistant variants is usually rapid.</text>
</comment>
<comment type="subunit">
    <text evidence="1">Homotetramer; composed of two disulfide-linked dimers held together by non-covalent interactions. May interact with matrix protein 1.</text>
</comment>
<comment type="subcellular location">
    <subcellularLocation>
        <location evidence="1">Virion membrane</location>
    </subcellularLocation>
    <subcellularLocation>
        <location evidence="1">Host apical cell membrane</location>
        <topology evidence="1">Single-pass type III membrane protein</topology>
    </subcellularLocation>
    <text evidence="1">Abundantly expressed at the apical plasma membrane in infected polarized epithelial cells, in close proximity to budding and assembled virions. Minor component of virions (only 16-20 molecules/virion).</text>
</comment>
<comment type="alternative products">
    <event type="alternative splicing"/>
    <isoform>
        <id>P0C5T3-1</id>
        <name>M2</name>
        <sequence type="displayed"/>
    </isoform>
    <isoform>
        <id>Q809Z8-1</id>
        <name>M1</name>
        <sequence type="external"/>
    </isoform>
    <text>Only the first 9 residues are shared by the 2 isoforms.</text>
</comment>
<comment type="domain">
    <text evidence="1">Cytoplasmic tail plays an important role in virion assembly and morphogenesis.</text>
</comment>
<comment type="miscellaneous">
    <text evidence="1">When the channel is activated, one or more imidazole moieties of His-37 probably become bi-protonated.</text>
</comment>
<comment type="similarity">
    <text evidence="1">Belongs to the influenza viruses matrix protein M2 family.</text>
</comment>
<proteinExistence type="inferred from homology"/>
<gene>
    <name evidence="1" type="primary">M</name>
</gene>